<protein>
    <recommendedName>
        <fullName evidence="1">1-(5-phosphoribosyl)-5-[(5-phosphoribosylamino)methylideneamino] imidazole-4-carboxamide isomerase</fullName>
        <ecNumber evidence="1">5.3.1.16</ecNumber>
    </recommendedName>
    <alternativeName>
        <fullName evidence="1">Phosphoribosylformimino-5-aminoimidazole carboxamide ribotide isomerase</fullName>
    </alternativeName>
</protein>
<comment type="catalytic activity">
    <reaction evidence="1">
        <text>1-(5-phospho-beta-D-ribosyl)-5-[(5-phospho-beta-D-ribosylamino)methylideneamino]imidazole-4-carboxamide = 5-[(5-phospho-1-deoxy-D-ribulos-1-ylimino)methylamino]-1-(5-phospho-beta-D-ribosyl)imidazole-4-carboxamide</text>
        <dbReference type="Rhea" id="RHEA:15469"/>
        <dbReference type="ChEBI" id="CHEBI:58435"/>
        <dbReference type="ChEBI" id="CHEBI:58525"/>
        <dbReference type="EC" id="5.3.1.16"/>
    </reaction>
</comment>
<comment type="pathway">
    <text evidence="1">Amino-acid biosynthesis; L-histidine biosynthesis; L-histidine from 5-phospho-alpha-D-ribose 1-diphosphate: step 4/9.</text>
</comment>
<comment type="subcellular location">
    <subcellularLocation>
        <location evidence="1">Cytoplasm</location>
    </subcellularLocation>
</comment>
<comment type="similarity">
    <text evidence="1">Belongs to the HisA/HisF family.</text>
</comment>
<feature type="chain" id="PRO_1000135110" description="1-(5-phosphoribosyl)-5-[(5-phosphoribosylamino)methylideneamino] imidazole-4-carboxamide isomerase">
    <location>
        <begin position="1"/>
        <end position="245"/>
    </location>
</feature>
<feature type="active site" description="Proton acceptor" evidence="1">
    <location>
        <position position="7"/>
    </location>
</feature>
<feature type="active site" description="Proton donor" evidence="1">
    <location>
        <position position="129"/>
    </location>
</feature>
<proteinExistence type="inferred from homology"/>
<sequence length="245" mass="26015">MIIPALDLIDGTVVRLHQGDYGKQRDYGNDPLPRLQDYAAQGAEVLHLVDLTGAKDPAKRQIPLIKTLVAGVNVPVQVGGGVRSEEDVAALLEAGVARVVVGSTAVKSPDMVKGWFERFGADALVLALDVRIDEQGNKQVAVSGWQENSGVSLEQLVETYLPVGLKHVLCTDISRDGTLAGSNVSLYEEVCARYPQVAFQSSGGIGEINDVAALRGTGVRGVIVGRALLEGKFTVKEAIACWQNA</sequence>
<dbReference type="EC" id="5.3.1.16" evidence="1"/>
<dbReference type="EMBL" id="CU928164">
    <property type="protein sequence ID" value="CAR17131.1"/>
    <property type="molecule type" value="Genomic_DNA"/>
</dbReference>
<dbReference type="RefSeq" id="WP_000586437.1">
    <property type="nucleotide sequence ID" value="NC_011750.1"/>
</dbReference>
<dbReference type="RefSeq" id="YP_002407016.1">
    <property type="nucleotide sequence ID" value="NC_011750.1"/>
</dbReference>
<dbReference type="SMR" id="B7NQG6"/>
<dbReference type="STRING" id="585057.ECIAI39_0994"/>
<dbReference type="KEGG" id="ect:ECIAI39_0994"/>
<dbReference type="PATRIC" id="fig|585057.6.peg.1043"/>
<dbReference type="HOGENOM" id="CLU_048577_1_2_6"/>
<dbReference type="UniPathway" id="UPA00031">
    <property type="reaction ID" value="UER00009"/>
</dbReference>
<dbReference type="Proteomes" id="UP000000749">
    <property type="component" value="Chromosome"/>
</dbReference>
<dbReference type="GO" id="GO:0005737">
    <property type="term" value="C:cytoplasm"/>
    <property type="evidence" value="ECO:0007669"/>
    <property type="project" value="UniProtKB-SubCell"/>
</dbReference>
<dbReference type="GO" id="GO:0003949">
    <property type="term" value="F:1-(5-phosphoribosyl)-5-[(5-phosphoribosylamino)methylideneamino]imidazole-4-carboxamide isomerase activity"/>
    <property type="evidence" value="ECO:0007669"/>
    <property type="project" value="UniProtKB-UniRule"/>
</dbReference>
<dbReference type="GO" id="GO:0000105">
    <property type="term" value="P:L-histidine biosynthetic process"/>
    <property type="evidence" value="ECO:0007669"/>
    <property type="project" value="UniProtKB-UniRule"/>
</dbReference>
<dbReference type="GO" id="GO:0000162">
    <property type="term" value="P:L-tryptophan biosynthetic process"/>
    <property type="evidence" value="ECO:0007669"/>
    <property type="project" value="TreeGrafter"/>
</dbReference>
<dbReference type="CDD" id="cd04732">
    <property type="entry name" value="HisA"/>
    <property type="match status" value="1"/>
</dbReference>
<dbReference type="FunFam" id="3.20.20.70:FF:000009">
    <property type="entry name" value="1-(5-phosphoribosyl)-5-[(5-phosphoribosylamino)methylideneamino] imidazole-4-carboxamide isomerase"/>
    <property type="match status" value="1"/>
</dbReference>
<dbReference type="Gene3D" id="3.20.20.70">
    <property type="entry name" value="Aldolase class I"/>
    <property type="match status" value="1"/>
</dbReference>
<dbReference type="HAMAP" id="MF_01014">
    <property type="entry name" value="HisA"/>
    <property type="match status" value="1"/>
</dbReference>
<dbReference type="InterPro" id="IPR013785">
    <property type="entry name" value="Aldolase_TIM"/>
</dbReference>
<dbReference type="InterPro" id="IPR006062">
    <property type="entry name" value="His_biosynth"/>
</dbReference>
<dbReference type="InterPro" id="IPR006063">
    <property type="entry name" value="HisA_bact_arch"/>
</dbReference>
<dbReference type="InterPro" id="IPR044524">
    <property type="entry name" value="Isoase_HisA-like"/>
</dbReference>
<dbReference type="InterPro" id="IPR023016">
    <property type="entry name" value="Isoase_HisA-like_bact"/>
</dbReference>
<dbReference type="InterPro" id="IPR011060">
    <property type="entry name" value="RibuloseP-bd_barrel"/>
</dbReference>
<dbReference type="NCBIfam" id="TIGR00007">
    <property type="entry name" value="1-(5-phosphoribosyl)-5-[(5-phosphoribosylamino)methylideneamino]imidazole-4-carboxamide isomerase"/>
    <property type="match status" value="1"/>
</dbReference>
<dbReference type="PANTHER" id="PTHR43090">
    <property type="entry name" value="1-(5-PHOSPHORIBOSYL)-5-[(5-PHOSPHORIBOSYLAMINO)METHYLIDENEAMINO] IMIDAZOLE-4-CARBOXAMIDE ISOMERASE"/>
    <property type="match status" value="1"/>
</dbReference>
<dbReference type="PANTHER" id="PTHR43090:SF2">
    <property type="entry name" value="1-(5-PHOSPHORIBOSYL)-5-[(5-PHOSPHORIBOSYLAMINO)METHYLIDENEAMINO] IMIDAZOLE-4-CARBOXAMIDE ISOMERASE"/>
    <property type="match status" value="1"/>
</dbReference>
<dbReference type="Pfam" id="PF00977">
    <property type="entry name" value="His_biosynth"/>
    <property type="match status" value="1"/>
</dbReference>
<dbReference type="SUPFAM" id="SSF51366">
    <property type="entry name" value="Ribulose-phoshate binding barrel"/>
    <property type="match status" value="1"/>
</dbReference>
<evidence type="ECO:0000255" key="1">
    <source>
        <dbReference type="HAMAP-Rule" id="MF_01014"/>
    </source>
</evidence>
<keyword id="KW-0028">Amino-acid biosynthesis</keyword>
<keyword id="KW-0963">Cytoplasm</keyword>
<keyword id="KW-0368">Histidine biosynthesis</keyword>
<keyword id="KW-0413">Isomerase</keyword>
<name>HIS4_ECO7I</name>
<reference key="1">
    <citation type="journal article" date="2009" name="PLoS Genet.">
        <title>Organised genome dynamics in the Escherichia coli species results in highly diverse adaptive paths.</title>
        <authorList>
            <person name="Touchon M."/>
            <person name="Hoede C."/>
            <person name="Tenaillon O."/>
            <person name="Barbe V."/>
            <person name="Baeriswyl S."/>
            <person name="Bidet P."/>
            <person name="Bingen E."/>
            <person name="Bonacorsi S."/>
            <person name="Bouchier C."/>
            <person name="Bouvet O."/>
            <person name="Calteau A."/>
            <person name="Chiapello H."/>
            <person name="Clermont O."/>
            <person name="Cruveiller S."/>
            <person name="Danchin A."/>
            <person name="Diard M."/>
            <person name="Dossat C."/>
            <person name="Karoui M.E."/>
            <person name="Frapy E."/>
            <person name="Garry L."/>
            <person name="Ghigo J.M."/>
            <person name="Gilles A.M."/>
            <person name="Johnson J."/>
            <person name="Le Bouguenec C."/>
            <person name="Lescat M."/>
            <person name="Mangenot S."/>
            <person name="Martinez-Jehanne V."/>
            <person name="Matic I."/>
            <person name="Nassif X."/>
            <person name="Oztas S."/>
            <person name="Petit M.A."/>
            <person name="Pichon C."/>
            <person name="Rouy Z."/>
            <person name="Ruf C.S."/>
            <person name="Schneider D."/>
            <person name="Tourret J."/>
            <person name="Vacherie B."/>
            <person name="Vallenet D."/>
            <person name="Medigue C."/>
            <person name="Rocha E.P.C."/>
            <person name="Denamur E."/>
        </authorList>
    </citation>
    <scope>NUCLEOTIDE SEQUENCE [LARGE SCALE GENOMIC DNA]</scope>
    <source>
        <strain>IAI39 / ExPEC</strain>
    </source>
</reference>
<accession>B7NQG6</accession>
<gene>
    <name evidence="1" type="primary">hisA</name>
    <name type="ordered locus">ECIAI39_0994</name>
</gene>
<organism>
    <name type="scientific">Escherichia coli O7:K1 (strain IAI39 / ExPEC)</name>
    <dbReference type="NCBI Taxonomy" id="585057"/>
    <lineage>
        <taxon>Bacteria</taxon>
        <taxon>Pseudomonadati</taxon>
        <taxon>Pseudomonadota</taxon>
        <taxon>Gammaproteobacteria</taxon>
        <taxon>Enterobacterales</taxon>
        <taxon>Enterobacteriaceae</taxon>
        <taxon>Escherichia</taxon>
    </lineage>
</organism>